<name>MURB_BARBK</name>
<feature type="chain" id="PRO_1000002863" description="UDP-N-acetylenolpyruvoylglucosamine reductase">
    <location>
        <begin position="1"/>
        <end position="324"/>
    </location>
</feature>
<feature type="domain" description="FAD-binding PCMH-type" evidence="1">
    <location>
        <begin position="39"/>
        <end position="220"/>
    </location>
</feature>
<feature type="active site" evidence="1">
    <location>
        <position position="185"/>
    </location>
</feature>
<feature type="active site" description="Proton donor" evidence="1">
    <location>
        <position position="234"/>
    </location>
</feature>
<feature type="active site" evidence="1">
    <location>
        <position position="304"/>
    </location>
</feature>
<organism>
    <name type="scientific">Bartonella bacilliformis (strain ATCC 35685 / KC583 / Herrer 020/F12,63)</name>
    <dbReference type="NCBI Taxonomy" id="360095"/>
    <lineage>
        <taxon>Bacteria</taxon>
        <taxon>Pseudomonadati</taxon>
        <taxon>Pseudomonadota</taxon>
        <taxon>Alphaproteobacteria</taxon>
        <taxon>Hyphomicrobiales</taxon>
        <taxon>Bartonellaceae</taxon>
        <taxon>Bartonella</taxon>
    </lineage>
</organism>
<accession>A1UTC3</accession>
<sequence>MNFQPIDGKKLLAWLQPVLSDIKGKITPNVEMRKVTWFRTGGLAELFYQPADEDDLALFFKVLPEFVPVTIVGIGSNLLVRDGGIPGVVIRLSTKSFGQIKQVSSTRFLVGAATADKHLASAALEAEISGFHFYHGIPGGLGGALKMNAGANGVETAERVVEVYALDRKGERHILNLRDMNYAYRHCNIPEGLVFTAALLEGDVGNKDDIRAAMHEVALHRETVQPIREKTGGSTFRNLEDISAWKVIDEAGCRGLQIGGAQMSEMHCNFMINMGEATGYDLEKLGETVRARVFNHSAHHLEWEIQRIGQFEQDRIVLPFDQFH</sequence>
<comment type="function">
    <text evidence="1">Cell wall formation.</text>
</comment>
<comment type="catalytic activity">
    <reaction evidence="1">
        <text>UDP-N-acetyl-alpha-D-muramate + NADP(+) = UDP-N-acetyl-3-O-(1-carboxyvinyl)-alpha-D-glucosamine + NADPH + H(+)</text>
        <dbReference type="Rhea" id="RHEA:12248"/>
        <dbReference type="ChEBI" id="CHEBI:15378"/>
        <dbReference type="ChEBI" id="CHEBI:57783"/>
        <dbReference type="ChEBI" id="CHEBI:58349"/>
        <dbReference type="ChEBI" id="CHEBI:68483"/>
        <dbReference type="ChEBI" id="CHEBI:70757"/>
        <dbReference type="EC" id="1.3.1.98"/>
    </reaction>
</comment>
<comment type="cofactor">
    <cofactor evidence="1">
        <name>FAD</name>
        <dbReference type="ChEBI" id="CHEBI:57692"/>
    </cofactor>
</comment>
<comment type="pathway">
    <text evidence="1">Cell wall biogenesis; peptidoglycan biosynthesis.</text>
</comment>
<comment type="subcellular location">
    <subcellularLocation>
        <location evidence="1">Cytoplasm</location>
    </subcellularLocation>
</comment>
<comment type="similarity">
    <text evidence="1">Belongs to the MurB family.</text>
</comment>
<gene>
    <name evidence="1" type="primary">murB</name>
    <name type="ordered locus">BARBAKC583_0945</name>
</gene>
<dbReference type="EC" id="1.3.1.98" evidence="1"/>
<dbReference type="EMBL" id="CP000524">
    <property type="protein sequence ID" value="ABM44449.1"/>
    <property type="molecule type" value="Genomic_DNA"/>
</dbReference>
<dbReference type="SMR" id="A1UTC3"/>
<dbReference type="STRING" id="360095.BARBAKC583_0945"/>
<dbReference type="KEGG" id="bbk:BARBAKC583_0945"/>
<dbReference type="eggNOG" id="COG0812">
    <property type="taxonomic scope" value="Bacteria"/>
</dbReference>
<dbReference type="HOGENOM" id="CLU_035304_1_0_5"/>
<dbReference type="UniPathway" id="UPA00219"/>
<dbReference type="Proteomes" id="UP000000643">
    <property type="component" value="Chromosome"/>
</dbReference>
<dbReference type="GO" id="GO:0005829">
    <property type="term" value="C:cytosol"/>
    <property type="evidence" value="ECO:0007669"/>
    <property type="project" value="TreeGrafter"/>
</dbReference>
<dbReference type="GO" id="GO:0071949">
    <property type="term" value="F:FAD binding"/>
    <property type="evidence" value="ECO:0007669"/>
    <property type="project" value="InterPro"/>
</dbReference>
<dbReference type="GO" id="GO:0008762">
    <property type="term" value="F:UDP-N-acetylmuramate dehydrogenase activity"/>
    <property type="evidence" value="ECO:0007669"/>
    <property type="project" value="UniProtKB-UniRule"/>
</dbReference>
<dbReference type="GO" id="GO:0051301">
    <property type="term" value="P:cell division"/>
    <property type="evidence" value="ECO:0007669"/>
    <property type="project" value="UniProtKB-KW"/>
</dbReference>
<dbReference type="GO" id="GO:0071555">
    <property type="term" value="P:cell wall organization"/>
    <property type="evidence" value="ECO:0007669"/>
    <property type="project" value="UniProtKB-KW"/>
</dbReference>
<dbReference type="GO" id="GO:0009252">
    <property type="term" value="P:peptidoglycan biosynthetic process"/>
    <property type="evidence" value="ECO:0007669"/>
    <property type="project" value="UniProtKB-UniRule"/>
</dbReference>
<dbReference type="GO" id="GO:0008360">
    <property type="term" value="P:regulation of cell shape"/>
    <property type="evidence" value="ECO:0007669"/>
    <property type="project" value="UniProtKB-KW"/>
</dbReference>
<dbReference type="Gene3D" id="3.30.465.10">
    <property type="match status" value="1"/>
</dbReference>
<dbReference type="Gene3D" id="3.90.78.10">
    <property type="entry name" value="UDP-N-acetylenolpyruvoylglucosamine reductase, C-terminal domain"/>
    <property type="match status" value="1"/>
</dbReference>
<dbReference type="Gene3D" id="3.30.43.10">
    <property type="entry name" value="Uridine Diphospho-n-acetylenolpyruvylglucosamine Reductase, domain 2"/>
    <property type="match status" value="1"/>
</dbReference>
<dbReference type="HAMAP" id="MF_00037">
    <property type="entry name" value="MurB"/>
    <property type="match status" value="1"/>
</dbReference>
<dbReference type="InterPro" id="IPR016166">
    <property type="entry name" value="FAD-bd_PCMH"/>
</dbReference>
<dbReference type="InterPro" id="IPR036318">
    <property type="entry name" value="FAD-bd_PCMH-like_sf"/>
</dbReference>
<dbReference type="InterPro" id="IPR016167">
    <property type="entry name" value="FAD-bd_PCMH_sub1"/>
</dbReference>
<dbReference type="InterPro" id="IPR016169">
    <property type="entry name" value="FAD-bd_PCMH_sub2"/>
</dbReference>
<dbReference type="InterPro" id="IPR003170">
    <property type="entry name" value="MurB"/>
</dbReference>
<dbReference type="InterPro" id="IPR011601">
    <property type="entry name" value="MurB_C"/>
</dbReference>
<dbReference type="InterPro" id="IPR036635">
    <property type="entry name" value="MurB_C_sf"/>
</dbReference>
<dbReference type="InterPro" id="IPR006094">
    <property type="entry name" value="Oxid_FAD_bind_N"/>
</dbReference>
<dbReference type="NCBIfam" id="TIGR00179">
    <property type="entry name" value="murB"/>
    <property type="match status" value="1"/>
</dbReference>
<dbReference type="NCBIfam" id="NF010480">
    <property type="entry name" value="PRK13905.1"/>
    <property type="match status" value="1"/>
</dbReference>
<dbReference type="PANTHER" id="PTHR21071">
    <property type="entry name" value="UDP-N-ACETYLENOLPYRUVOYLGLUCOSAMINE REDUCTASE"/>
    <property type="match status" value="1"/>
</dbReference>
<dbReference type="PANTHER" id="PTHR21071:SF4">
    <property type="entry name" value="UDP-N-ACETYLENOLPYRUVOYLGLUCOSAMINE REDUCTASE"/>
    <property type="match status" value="1"/>
</dbReference>
<dbReference type="Pfam" id="PF01565">
    <property type="entry name" value="FAD_binding_4"/>
    <property type="match status" value="1"/>
</dbReference>
<dbReference type="Pfam" id="PF02873">
    <property type="entry name" value="MurB_C"/>
    <property type="match status" value="1"/>
</dbReference>
<dbReference type="SUPFAM" id="SSF56176">
    <property type="entry name" value="FAD-binding/transporter-associated domain-like"/>
    <property type="match status" value="1"/>
</dbReference>
<dbReference type="SUPFAM" id="SSF56194">
    <property type="entry name" value="Uridine diphospho-N-Acetylenolpyruvylglucosamine reductase, MurB, C-terminal domain"/>
    <property type="match status" value="1"/>
</dbReference>
<dbReference type="PROSITE" id="PS51387">
    <property type="entry name" value="FAD_PCMH"/>
    <property type="match status" value="1"/>
</dbReference>
<reference key="1">
    <citation type="submission" date="2006-12" db="EMBL/GenBank/DDBJ databases">
        <authorList>
            <person name="Hendrix L."/>
            <person name="Mohamoud Y."/>
            <person name="Radune D."/>
            <person name="Shvartsbeyn A."/>
            <person name="Daugherty S."/>
            <person name="Dodson R."/>
            <person name="Durkin A.S."/>
            <person name="Harkins D."/>
            <person name="Huot H."/>
            <person name="Kothari S.P."/>
            <person name="Madupu R."/>
            <person name="Li J."/>
            <person name="Nelson W.C."/>
            <person name="Shrivastava S."/>
            <person name="Giglio M.G."/>
            <person name="Haft D."/>
            <person name="Selengut J."/>
            <person name="Fraser-Ligget C."/>
            <person name="Seshadri R."/>
        </authorList>
    </citation>
    <scope>NUCLEOTIDE SEQUENCE [LARGE SCALE GENOMIC DNA]</scope>
    <source>
        <strain>ATCC 35685 / KC583 / Herrer 020/F12,63</strain>
    </source>
</reference>
<evidence type="ECO:0000255" key="1">
    <source>
        <dbReference type="HAMAP-Rule" id="MF_00037"/>
    </source>
</evidence>
<keyword id="KW-0131">Cell cycle</keyword>
<keyword id="KW-0132">Cell division</keyword>
<keyword id="KW-0133">Cell shape</keyword>
<keyword id="KW-0961">Cell wall biogenesis/degradation</keyword>
<keyword id="KW-0963">Cytoplasm</keyword>
<keyword id="KW-0274">FAD</keyword>
<keyword id="KW-0285">Flavoprotein</keyword>
<keyword id="KW-0521">NADP</keyword>
<keyword id="KW-0560">Oxidoreductase</keyword>
<keyword id="KW-0573">Peptidoglycan synthesis</keyword>
<protein>
    <recommendedName>
        <fullName evidence="1">UDP-N-acetylenolpyruvoylglucosamine reductase</fullName>
        <ecNumber evidence="1">1.3.1.98</ecNumber>
    </recommendedName>
    <alternativeName>
        <fullName evidence="1">UDP-N-acetylmuramate dehydrogenase</fullName>
    </alternativeName>
</protein>
<proteinExistence type="inferred from homology"/>